<comment type="function">
    <text evidence="1">This protein specifically catalyzes the removal of signal peptides from prolipoproteins.</text>
</comment>
<comment type="catalytic activity">
    <reaction evidence="1">
        <text>Release of signal peptides from bacterial membrane prolipoproteins. Hydrolyzes -Xaa-Yaa-Zaa-|-(S,diacylglyceryl)Cys-, in which Xaa is hydrophobic (preferably Leu), and Yaa (Ala or Ser) and Zaa (Gly or Ala) have small, neutral side chains.</text>
        <dbReference type="EC" id="3.4.23.36"/>
    </reaction>
</comment>
<comment type="pathway">
    <text evidence="1">Protein modification; lipoprotein biosynthesis (signal peptide cleavage).</text>
</comment>
<comment type="subcellular location">
    <subcellularLocation>
        <location evidence="1">Cell membrane</location>
        <topology evidence="1">Multi-pass membrane protein</topology>
    </subcellularLocation>
</comment>
<comment type="similarity">
    <text evidence="1">Belongs to the peptidase A8 family.</text>
</comment>
<feature type="chain" id="PRO_0000289352" description="Lipoprotein signal peptidase">
    <location>
        <begin position="1"/>
        <end position="152"/>
    </location>
</feature>
<feature type="transmembrane region" description="Helical" evidence="1">
    <location>
        <begin position="55"/>
        <end position="75"/>
    </location>
</feature>
<feature type="transmembrane region" description="Helical" evidence="1">
    <location>
        <begin position="85"/>
        <end position="105"/>
    </location>
</feature>
<feature type="transmembrane region" description="Helical" evidence="1">
    <location>
        <begin position="124"/>
        <end position="144"/>
    </location>
</feature>
<feature type="active site" evidence="1">
    <location>
        <position position="111"/>
    </location>
</feature>
<feature type="active site" evidence="1">
    <location>
        <position position="129"/>
    </location>
</feature>
<keyword id="KW-0064">Aspartyl protease</keyword>
<keyword id="KW-1003">Cell membrane</keyword>
<keyword id="KW-0378">Hydrolase</keyword>
<keyword id="KW-0472">Membrane</keyword>
<keyword id="KW-0645">Protease</keyword>
<keyword id="KW-0812">Transmembrane</keyword>
<keyword id="KW-1133">Transmembrane helix</keyword>
<organism>
    <name type="scientific">Bacillus thuringiensis subsp. konkukian (strain 97-27)</name>
    <dbReference type="NCBI Taxonomy" id="281309"/>
    <lineage>
        <taxon>Bacteria</taxon>
        <taxon>Bacillati</taxon>
        <taxon>Bacillota</taxon>
        <taxon>Bacilli</taxon>
        <taxon>Bacillales</taxon>
        <taxon>Bacillaceae</taxon>
        <taxon>Bacillus</taxon>
        <taxon>Bacillus cereus group</taxon>
    </lineage>
</organism>
<dbReference type="EC" id="3.4.23.36" evidence="1"/>
<dbReference type="EMBL" id="AE017355">
    <property type="protein sequence ID" value="AAT60639.1"/>
    <property type="molecule type" value="Genomic_DNA"/>
</dbReference>
<dbReference type="RefSeq" id="WP_000642181.1">
    <property type="nucleotide sequence ID" value="NC_005957.1"/>
</dbReference>
<dbReference type="RefSeq" id="YP_037955.1">
    <property type="nucleotide sequence ID" value="NC_005957.1"/>
</dbReference>
<dbReference type="SMR" id="Q6HES1"/>
<dbReference type="GeneID" id="45023722"/>
<dbReference type="KEGG" id="btk:BT9727_3635"/>
<dbReference type="PATRIC" id="fig|281309.8.peg.3873"/>
<dbReference type="HOGENOM" id="CLU_083252_3_0_9"/>
<dbReference type="UniPathway" id="UPA00665"/>
<dbReference type="Proteomes" id="UP000001301">
    <property type="component" value="Chromosome"/>
</dbReference>
<dbReference type="GO" id="GO:0005886">
    <property type="term" value="C:plasma membrane"/>
    <property type="evidence" value="ECO:0007669"/>
    <property type="project" value="UniProtKB-SubCell"/>
</dbReference>
<dbReference type="GO" id="GO:0004190">
    <property type="term" value="F:aspartic-type endopeptidase activity"/>
    <property type="evidence" value="ECO:0007669"/>
    <property type="project" value="UniProtKB-UniRule"/>
</dbReference>
<dbReference type="GO" id="GO:0006508">
    <property type="term" value="P:proteolysis"/>
    <property type="evidence" value="ECO:0007669"/>
    <property type="project" value="UniProtKB-KW"/>
</dbReference>
<dbReference type="HAMAP" id="MF_00161">
    <property type="entry name" value="LspA"/>
    <property type="match status" value="1"/>
</dbReference>
<dbReference type="InterPro" id="IPR001872">
    <property type="entry name" value="Peptidase_A8"/>
</dbReference>
<dbReference type="NCBIfam" id="TIGR00077">
    <property type="entry name" value="lspA"/>
    <property type="match status" value="1"/>
</dbReference>
<dbReference type="PANTHER" id="PTHR33695">
    <property type="entry name" value="LIPOPROTEIN SIGNAL PEPTIDASE"/>
    <property type="match status" value="1"/>
</dbReference>
<dbReference type="PANTHER" id="PTHR33695:SF1">
    <property type="entry name" value="LIPOPROTEIN SIGNAL PEPTIDASE"/>
    <property type="match status" value="1"/>
</dbReference>
<dbReference type="Pfam" id="PF01252">
    <property type="entry name" value="Peptidase_A8"/>
    <property type="match status" value="1"/>
</dbReference>
<dbReference type="PRINTS" id="PR00781">
    <property type="entry name" value="LIPOSIGPTASE"/>
</dbReference>
<dbReference type="PROSITE" id="PS00855">
    <property type="entry name" value="SPASE_II"/>
    <property type="match status" value="1"/>
</dbReference>
<protein>
    <recommendedName>
        <fullName evidence="1">Lipoprotein signal peptidase</fullName>
        <ecNumber evidence="1">3.4.23.36</ecNumber>
    </recommendedName>
    <alternativeName>
        <fullName evidence="1">Prolipoprotein signal peptidase</fullName>
    </alternativeName>
    <alternativeName>
        <fullName evidence="1">Signal peptidase II</fullName>
        <shortName evidence="1">SPase II</shortName>
    </alternativeName>
</protein>
<name>LSPA_BACHK</name>
<reference key="1">
    <citation type="journal article" date="2006" name="J. Bacteriol.">
        <title>Pathogenomic sequence analysis of Bacillus cereus and Bacillus thuringiensis isolates closely related to Bacillus anthracis.</title>
        <authorList>
            <person name="Han C.S."/>
            <person name="Xie G."/>
            <person name="Challacombe J.F."/>
            <person name="Altherr M.R."/>
            <person name="Bhotika S.S."/>
            <person name="Bruce D."/>
            <person name="Campbell C.S."/>
            <person name="Campbell M.L."/>
            <person name="Chen J."/>
            <person name="Chertkov O."/>
            <person name="Cleland C."/>
            <person name="Dimitrijevic M."/>
            <person name="Doggett N.A."/>
            <person name="Fawcett J.J."/>
            <person name="Glavina T."/>
            <person name="Goodwin L.A."/>
            <person name="Hill K.K."/>
            <person name="Hitchcock P."/>
            <person name="Jackson P.J."/>
            <person name="Keim P."/>
            <person name="Kewalramani A.R."/>
            <person name="Longmire J."/>
            <person name="Lucas S."/>
            <person name="Malfatti S."/>
            <person name="McMurry K."/>
            <person name="Meincke L.J."/>
            <person name="Misra M."/>
            <person name="Moseman B.L."/>
            <person name="Mundt M."/>
            <person name="Munk A.C."/>
            <person name="Okinaka R.T."/>
            <person name="Parson-Quintana B."/>
            <person name="Reilly L.P."/>
            <person name="Richardson P."/>
            <person name="Robinson D.L."/>
            <person name="Rubin E."/>
            <person name="Saunders E."/>
            <person name="Tapia R."/>
            <person name="Tesmer J.G."/>
            <person name="Thayer N."/>
            <person name="Thompson L.S."/>
            <person name="Tice H."/>
            <person name="Ticknor L.O."/>
            <person name="Wills P.L."/>
            <person name="Brettin T.S."/>
            <person name="Gilna P."/>
        </authorList>
    </citation>
    <scope>NUCLEOTIDE SEQUENCE [LARGE SCALE GENOMIC DNA]</scope>
    <source>
        <strain>97-27</strain>
    </source>
</reference>
<evidence type="ECO:0000255" key="1">
    <source>
        <dbReference type="HAMAP-Rule" id="MF_00161"/>
    </source>
</evidence>
<sequence length="152" mass="17454">MIYYVIALFVIAIDQISKWLIVKNMELGTSIPIIDNVLYITSHRNRGAAWGILENKMWFFYIITVVFVVFIVFYMKKYAKTDKLLGISLGLILGGAIGNFIDRVFRQEVVDFIHVYIFSYNYPVFNIADSALCIGVVLIIIQTLLEGKKTKE</sequence>
<gene>
    <name evidence="1" type="primary">lspA</name>
    <name type="ordered locus">BT9727_3635</name>
</gene>
<proteinExistence type="inferred from homology"/>
<accession>Q6HES1</accession>